<reference key="1">
    <citation type="journal article" date="1991" name="Cell">
        <title>HuD, a paraneoplastic encephalomyelitis antigen, contains RNA-binding domains and is homologous to Elav and Sex-lethal.</title>
        <authorList>
            <person name="Szabo A."/>
            <person name="Dalmau J."/>
            <person name="Manley G."/>
            <person name="Rosenfeld M."/>
            <person name="Wong E."/>
            <person name="Henson J."/>
            <person name="Posner J.B."/>
            <person name="Furneaux H.M."/>
        </authorList>
    </citation>
    <scope>NUCLEOTIDE SEQUENCE [MRNA] (ISOFORMS 1 AND 2)</scope>
    <scope>TISSUE SPECIFICITY</scope>
    <scope>VARIANT SER-275</scope>
    <source>
        <tissue>Brain</tissue>
    </source>
</reference>
<reference key="2">
    <citation type="journal article" date="2002" name="Int. J. Cancer">
        <title>Novel products of the HuD, HuC, NNP-1 and alpha-internexin genes identified by autologous antibody screening of a pediatric neuroblastoma library.</title>
        <authorList>
            <person name="Behrends U."/>
            <person name="Jandl T."/>
            <person name="Golbeck A."/>
            <person name="Lechner B."/>
            <person name="Mueller-Weihrich S."/>
            <person name="Schmid I."/>
            <person name="Till H."/>
            <person name="Berthold F."/>
            <person name="Voltz R."/>
            <person name="Mautner J.M."/>
        </authorList>
    </citation>
    <scope>NUCLEOTIDE SEQUENCE [MRNA] (ISOFORMS 1; 2; 3 AND 4)</scope>
    <scope>VARIANT SER-275</scope>
    <source>
        <tissue>Neuroblastoma</tissue>
    </source>
</reference>
<reference key="3">
    <citation type="journal article" date="2004" name="Nat. Genet.">
        <title>Complete sequencing and characterization of 21,243 full-length human cDNAs.</title>
        <authorList>
            <person name="Ota T."/>
            <person name="Suzuki Y."/>
            <person name="Nishikawa T."/>
            <person name="Otsuki T."/>
            <person name="Sugiyama T."/>
            <person name="Irie R."/>
            <person name="Wakamatsu A."/>
            <person name="Hayashi K."/>
            <person name="Sato H."/>
            <person name="Nagai K."/>
            <person name="Kimura K."/>
            <person name="Makita H."/>
            <person name="Sekine M."/>
            <person name="Obayashi M."/>
            <person name="Nishi T."/>
            <person name="Shibahara T."/>
            <person name="Tanaka T."/>
            <person name="Ishii S."/>
            <person name="Yamamoto J."/>
            <person name="Saito K."/>
            <person name="Kawai Y."/>
            <person name="Isono Y."/>
            <person name="Nakamura Y."/>
            <person name="Nagahari K."/>
            <person name="Murakami K."/>
            <person name="Yasuda T."/>
            <person name="Iwayanagi T."/>
            <person name="Wagatsuma M."/>
            <person name="Shiratori A."/>
            <person name="Sudo H."/>
            <person name="Hosoiri T."/>
            <person name="Kaku Y."/>
            <person name="Kodaira H."/>
            <person name="Kondo H."/>
            <person name="Sugawara M."/>
            <person name="Takahashi M."/>
            <person name="Kanda K."/>
            <person name="Yokoi T."/>
            <person name="Furuya T."/>
            <person name="Kikkawa E."/>
            <person name="Omura Y."/>
            <person name="Abe K."/>
            <person name="Kamihara K."/>
            <person name="Katsuta N."/>
            <person name="Sato K."/>
            <person name="Tanikawa M."/>
            <person name="Yamazaki M."/>
            <person name="Ninomiya K."/>
            <person name="Ishibashi T."/>
            <person name="Yamashita H."/>
            <person name="Murakawa K."/>
            <person name="Fujimori K."/>
            <person name="Tanai H."/>
            <person name="Kimata M."/>
            <person name="Watanabe M."/>
            <person name="Hiraoka S."/>
            <person name="Chiba Y."/>
            <person name="Ishida S."/>
            <person name="Ono Y."/>
            <person name="Takiguchi S."/>
            <person name="Watanabe S."/>
            <person name="Yosida M."/>
            <person name="Hotuta T."/>
            <person name="Kusano J."/>
            <person name="Kanehori K."/>
            <person name="Takahashi-Fujii A."/>
            <person name="Hara H."/>
            <person name="Tanase T.-O."/>
            <person name="Nomura Y."/>
            <person name="Togiya S."/>
            <person name="Komai F."/>
            <person name="Hara R."/>
            <person name="Takeuchi K."/>
            <person name="Arita M."/>
            <person name="Imose N."/>
            <person name="Musashino K."/>
            <person name="Yuuki H."/>
            <person name="Oshima A."/>
            <person name="Sasaki N."/>
            <person name="Aotsuka S."/>
            <person name="Yoshikawa Y."/>
            <person name="Matsunawa H."/>
            <person name="Ichihara T."/>
            <person name="Shiohata N."/>
            <person name="Sano S."/>
            <person name="Moriya S."/>
            <person name="Momiyama H."/>
            <person name="Satoh N."/>
            <person name="Takami S."/>
            <person name="Terashima Y."/>
            <person name="Suzuki O."/>
            <person name="Nakagawa S."/>
            <person name="Senoh A."/>
            <person name="Mizoguchi H."/>
            <person name="Goto Y."/>
            <person name="Shimizu F."/>
            <person name="Wakebe H."/>
            <person name="Hishigaki H."/>
            <person name="Watanabe T."/>
            <person name="Sugiyama A."/>
            <person name="Takemoto M."/>
            <person name="Kawakami B."/>
            <person name="Yamazaki M."/>
            <person name="Watanabe K."/>
            <person name="Kumagai A."/>
            <person name="Itakura S."/>
            <person name="Fukuzumi Y."/>
            <person name="Fujimori Y."/>
            <person name="Komiyama M."/>
            <person name="Tashiro H."/>
            <person name="Tanigami A."/>
            <person name="Fujiwara T."/>
            <person name="Ono T."/>
            <person name="Yamada K."/>
            <person name="Fujii Y."/>
            <person name="Ozaki K."/>
            <person name="Hirao M."/>
            <person name="Ohmori Y."/>
            <person name="Kawabata A."/>
            <person name="Hikiji T."/>
            <person name="Kobatake N."/>
            <person name="Inagaki H."/>
            <person name="Ikema Y."/>
            <person name="Okamoto S."/>
            <person name="Okitani R."/>
            <person name="Kawakami T."/>
            <person name="Noguchi S."/>
            <person name="Itoh T."/>
            <person name="Shigeta K."/>
            <person name="Senba T."/>
            <person name="Matsumura K."/>
            <person name="Nakajima Y."/>
            <person name="Mizuno T."/>
            <person name="Morinaga M."/>
            <person name="Sasaki M."/>
            <person name="Togashi T."/>
            <person name="Oyama M."/>
            <person name="Hata H."/>
            <person name="Watanabe M."/>
            <person name="Komatsu T."/>
            <person name="Mizushima-Sugano J."/>
            <person name="Satoh T."/>
            <person name="Shirai Y."/>
            <person name="Takahashi Y."/>
            <person name="Nakagawa K."/>
            <person name="Okumura K."/>
            <person name="Nagase T."/>
            <person name="Nomura N."/>
            <person name="Kikuchi H."/>
            <person name="Masuho Y."/>
            <person name="Yamashita R."/>
            <person name="Nakai K."/>
            <person name="Yada T."/>
            <person name="Nakamura Y."/>
            <person name="Ohara O."/>
            <person name="Isogai T."/>
            <person name="Sugano S."/>
        </authorList>
    </citation>
    <scope>NUCLEOTIDE SEQUENCE [LARGE SCALE MRNA] (ISOFORM 5)</scope>
    <scope>TISSUE SPECIFICITY</scope>
    <source>
        <tissue>Brain</tissue>
    </source>
</reference>
<reference key="4">
    <citation type="journal article" date="2006" name="Nature">
        <title>The DNA sequence and biological annotation of human chromosome 1.</title>
        <authorList>
            <person name="Gregory S.G."/>
            <person name="Barlow K.F."/>
            <person name="McLay K.E."/>
            <person name="Kaul R."/>
            <person name="Swarbreck D."/>
            <person name="Dunham A."/>
            <person name="Scott C.E."/>
            <person name="Howe K.L."/>
            <person name="Woodfine K."/>
            <person name="Spencer C.C.A."/>
            <person name="Jones M.C."/>
            <person name="Gillson C."/>
            <person name="Searle S."/>
            <person name="Zhou Y."/>
            <person name="Kokocinski F."/>
            <person name="McDonald L."/>
            <person name="Evans R."/>
            <person name="Phillips K."/>
            <person name="Atkinson A."/>
            <person name="Cooper R."/>
            <person name="Jones C."/>
            <person name="Hall R.E."/>
            <person name="Andrews T.D."/>
            <person name="Lloyd C."/>
            <person name="Ainscough R."/>
            <person name="Almeida J.P."/>
            <person name="Ambrose K.D."/>
            <person name="Anderson F."/>
            <person name="Andrew R.W."/>
            <person name="Ashwell R.I.S."/>
            <person name="Aubin K."/>
            <person name="Babbage A.K."/>
            <person name="Bagguley C.L."/>
            <person name="Bailey J."/>
            <person name="Beasley H."/>
            <person name="Bethel G."/>
            <person name="Bird C.P."/>
            <person name="Bray-Allen S."/>
            <person name="Brown J.Y."/>
            <person name="Brown A.J."/>
            <person name="Buckley D."/>
            <person name="Burton J."/>
            <person name="Bye J."/>
            <person name="Carder C."/>
            <person name="Chapman J.C."/>
            <person name="Clark S.Y."/>
            <person name="Clarke G."/>
            <person name="Clee C."/>
            <person name="Cobley V."/>
            <person name="Collier R.E."/>
            <person name="Corby N."/>
            <person name="Coville G.J."/>
            <person name="Davies J."/>
            <person name="Deadman R."/>
            <person name="Dunn M."/>
            <person name="Earthrowl M."/>
            <person name="Ellington A.G."/>
            <person name="Errington H."/>
            <person name="Frankish A."/>
            <person name="Frankland J."/>
            <person name="French L."/>
            <person name="Garner P."/>
            <person name="Garnett J."/>
            <person name="Gay L."/>
            <person name="Ghori M.R.J."/>
            <person name="Gibson R."/>
            <person name="Gilby L.M."/>
            <person name="Gillett W."/>
            <person name="Glithero R.J."/>
            <person name="Grafham D.V."/>
            <person name="Griffiths C."/>
            <person name="Griffiths-Jones S."/>
            <person name="Grocock R."/>
            <person name="Hammond S."/>
            <person name="Harrison E.S.I."/>
            <person name="Hart E."/>
            <person name="Haugen E."/>
            <person name="Heath P.D."/>
            <person name="Holmes S."/>
            <person name="Holt K."/>
            <person name="Howden P.J."/>
            <person name="Hunt A.R."/>
            <person name="Hunt S.E."/>
            <person name="Hunter G."/>
            <person name="Isherwood J."/>
            <person name="James R."/>
            <person name="Johnson C."/>
            <person name="Johnson D."/>
            <person name="Joy A."/>
            <person name="Kay M."/>
            <person name="Kershaw J.K."/>
            <person name="Kibukawa M."/>
            <person name="Kimberley A.M."/>
            <person name="King A."/>
            <person name="Knights A.J."/>
            <person name="Lad H."/>
            <person name="Laird G."/>
            <person name="Lawlor S."/>
            <person name="Leongamornlert D.A."/>
            <person name="Lloyd D.M."/>
            <person name="Loveland J."/>
            <person name="Lovell J."/>
            <person name="Lush M.J."/>
            <person name="Lyne R."/>
            <person name="Martin S."/>
            <person name="Mashreghi-Mohammadi M."/>
            <person name="Matthews L."/>
            <person name="Matthews N.S.W."/>
            <person name="McLaren S."/>
            <person name="Milne S."/>
            <person name="Mistry S."/>
            <person name="Moore M.J.F."/>
            <person name="Nickerson T."/>
            <person name="O'Dell C.N."/>
            <person name="Oliver K."/>
            <person name="Palmeiri A."/>
            <person name="Palmer S.A."/>
            <person name="Parker A."/>
            <person name="Patel D."/>
            <person name="Pearce A.V."/>
            <person name="Peck A.I."/>
            <person name="Pelan S."/>
            <person name="Phelps K."/>
            <person name="Phillimore B.J."/>
            <person name="Plumb R."/>
            <person name="Rajan J."/>
            <person name="Raymond C."/>
            <person name="Rouse G."/>
            <person name="Saenphimmachak C."/>
            <person name="Sehra H.K."/>
            <person name="Sheridan E."/>
            <person name="Shownkeen R."/>
            <person name="Sims S."/>
            <person name="Skuce C.D."/>
            <person name="Smith M."/>
            <person name="Steward C."/>
            <person name="Subramanian S."/>
            <person name="Sycamore N."/>
            <person name="Tracey A."/>
            <person name="Tromans A."/>
            <person name="Van Helmond Z."/>
            <person name="Wall M."/>
            <person name="Wallis J.M."/>
            <person name="White S."/>
            <person name="Whitehead S.L."/>
            <person name="Wilkinson J.E."/>
            <person name="Willey D.L."/>
            <person name="Williams H."/>
            <person name="Wilming L."/>
            <person name="Wray P.W."/>
            <person name="Wu Z."/>
            <person name="Coulson A."/>
            <person name="Vaudin M."/>
            <person name="Sulston J.E."/>
            <person name="Durbin R.M."/>
            <person name="Hubbard T."/>
            <person name="Wooster R."/>
            <person name="Dunham I."/>
            <person name="Carter N.P."/>
            <person name="McVean G."/>
            <person name="Ross M.T."/>
            <person name="Harrow J."/>
            <person name="Olson M.V."/>
            <person name="Beck S."/>
            <person name="Rogers J."/>
            <person name="Bentley D.R."/>
        </authorList>
    </citation>
    <scope>NUCLEOTIDE SEQUENCE [LARGE SCALE GENOMIC DNA]</scope>
</reference>
<reference key="5">
    <citation type="submission" date="2005-09" db="EMBL/GenBank/DDBJ databases">
        <authorList>
            <person name="Mural R.J."/>
            <person name="Istrail S."/>
            <person name="Sutton G."/>
            <person name="Florea L."/>
            <person name="Halpern A.L."/>
            <person name="Mobarry C.M."/>
            <person name="Lippert R."/>
            <person name="Walenz B."/>
            <person name="Shatkay H."/>
            <person name="Dew I."/>
            <person name="Miller J.R."/>
            <person name="Flanigan M.J."/>
            <person name="Edwards N.J."/>
            <person name="Bolanos R."/>
            <person name="Fasulo D."/>
            <person name="Halldorsson B.V."/>
            <person name="Hannenhalli S."/>
            <person name="Turner R."/>
            <person name="Yooseph S."/>
            <person name="Lu F."/>
            <person name="Nusskern D.R."/>
            <person name="Shue B.C."/>
            <person name="Zheng X.H."/>
            <person name="Zhong F."/>
            <person name="Delcher A.L."/>
            <person name="Huson D.H."/>
            <person name="Kravitz S.A."/>
            <person name="Mouchard L."/>
            <person name="Reinert K."/>
            <person name="Remington K.A."/>
            <person name="Clark A.G."/>
            <person name="Waterman M.S."/>
            <person name="Eichler E.E."/>
            <person name="Adams M.D."/>
            <person name="Hunkapiller M.W."/>
            <person name="Myers E.W."/>
            <person name="Venter J.C."/>
        </authorList>
    </citation>
    <scope>NUCLEOTIDE SEQUENCE [LARGE SCALE GENOMIC DNA]</scope>
</reference>
<reference key="6">
    <citation type="journal article" date="2004" name="Genome Res.">
        <title>The status, quality, and expansion of the NIH full-length cDNA project: the Mammalian Gene Collection (MGC).</title>
        <authorList>
            <consortium name="The MGC Project Team"/>
        </authorList>
    </citation>
    <scope>NUCLEOTIDE SEQUENCE [LARGE SCALE MRNA] (ISOFORM 2)</scope>
    <scope>VARIANTS GLY-171 AND THR-361</scope>
    <source>
        <tissue>Hypothalamus</tissue>
    </source>
</reference>
<reference key="7">
    <citation type="journal article" date="1995" name="Neurology">
        <title>Paraneoplastic encephalomyelitis antigens bind to the AU-rich elements of mRNA.</title>
        <authorList>
            <person name="Liu J."/>
            <person name="Dalmau J."/>
            <person name="Szabo A."/>
            <person name="Rosenfeld M."/>
            <person name="Huber J."/>
            <person name="Furneaux H."/>
        </authorList>
    </citation>
    <scope>NUCLEOTIDE SEQUENCE [MRNA] OF 245-284 (ISOFORM 1)</scope>
    <scope>FUNCTION</scope>
    <scope>ALTERNATIVE SPLICING</scope>
    <scope>VARIANT SER-275</scope>
</reference>
<reference key="8">
    <citation type="journal article" date="2000" name="Nucleic Acids Res.">
        <title>RNA-binding analyses of HuC and HuD with the VEGF and c-myc 3'-untranslated regions using a novel ELISA-based assay.</title>
        <authorList>
            <person name="King P.H."/>
        </authorList>
    </citation>
    <scope>FUNCTION</scope>
    <scope>RNA-BINDING</scope>
</reference>
<reference key="9">
    <citation type="journal article" date="2002" name="J. Biol. Chem.">
        <title>Poly(A) tail length-dependent stabilization of GAP-43 mRNA by the RNA-binding protein HuD.</title>
        <authorList>
            <person name="Beckel-Mitchener A.C."/>
            <person name="Miera A."/>
            <person name="Keller R."/>
            <person name="Perrone-Bizzozero N.I."/>
        </authorList>
    </citation>
    <scope>FUNCTION</scope>
</reference>
<reference key="10">
    <citation type="journal article" date="2003" name="J. Biol. Chem.">
        <title>Post-transcriptional regulation of acetylcholinesterase mRNAs in nerve growth factor-treated PC12 cells by the RNA-binding protein HuD.</title>
        <authorList>
            <person name="Deschenes-Furry J."/>
            <person name="Belanger G."/>
            <person name="Perrone-Bizzozero N."/>
            <person name="Jasmin B.J."/>
        </authorList>
    </citation>
    <scope>FUNCTION</scope>
</reference>
<reference key="11">
    <citation type="journal article" date="2006" name="Mol. Biol. Cell">
        <title>A nuclear function of Hu proteins as neuron-specific alternative RNA processing regulators.</title>
        <authorList>
            <person name="Zhu H."/>
            <person name="Hasman R.A."/>
            <person name="Barron V.A."/>
            <person name="Luo G."/>
            <person name="Lou H."/>
        </authorList>
    </citation>
    <scope>FUNCTION</scope>
</reference>
<reference key="12">
    <citation type="journal article" date="2006" name="Mol. Cell. Biol.">
        <title>CARM1 regulates proliferation of PC12 cells by methylating HuD.</title>
        <authorList>
            <person name="Fujiwara T."/>
            <person name="Mori Y."/>
            <person name="Chu D.L."/>
            <person name="Koyama Y."/>
            <person name="Miyata S."/>
            <person name="Tanaka H."/>
            <person name="Yachi K."/>
            <person name="Kubo T."/>
            <person name="Yoshikawa H."/>
            <person name="Tohyama M."/>
        </authorList>
    </citation>
    <scope>METHYLATION AT ARG-248</scope>
</reference>
<reference key="13">
    <citation type="journal article" date="2007" name="J. Neurosci.">
        <title>The RNA-binding protein HuD binds acetylcholinesterase mRNA in neurons and regulates its expression after axotomy.</title>
        <authorList>
            <person name="Deschenes-Furry J."/>
            <person name="Mousavi K."/>
            <person name="Bolognani F."/>
            <person name="Neve R.L."/>
            <person name="Parks R.J."/>
            <person name="Perrone-Bizzozero N.I."/>
            <person name="Jasmin B.J."/>
        </authorList>
    </citation>
    <scope>FUNCTION</scope>
</reference>
<reference key="14">
    <citation type="journal article" date="2008" name="J. Biol. Chem.">
        <title>Post-transcriptional regulation of neuro-oncological ventral antigen 1 by the neuronal RNA-binding proteins ELAV.</title>
        <authorList>
            <person name="Ratti A."/>
            <person name="Fallini C."/>
            <person name="Colombrita C."/>
            <person name="Pascale A."/>
            <person name="Laforenza U."/>
            <person name="Quattrone A."/>
            <person name="Silani V."/>
        </authorList>
    </citation>
    <scope>FUNCTION</scope>
</reference>
<reference key="15">
    <citation type="journal article" date="2011" name="Hum. Mol. Genet.">
        <title>HuD interacts with survival motor neuron protein and can rescue spinal muscular atrophy-like neuronal defects.</title>
        <authorList>
            <person name="Hubers L."/>
            <person name="Valderrama-Carvajal H."/>
            <person name="Laframboise J."/>
            <person name="Timbers J."/>
            <person name="Sanchez G."/>
            <person name="Cote J."/>
        </authorList>
    </citation>
    <scope>INTERACTION WITH SMN</scope>
    <scope>SUBCELLULAR LOCATION</scope>
    <scope>METHYLATION</scope>
</reference>
<reference key="16">
    <citation type="journal article" date="2011" name="J. Neurosci.">
        <title>The survival of motor neuron (SMN) protein interacts with the mRNA-binding protein HuD and regulates localization of poly(A) mRNA in primary motor neuron axons.</title>
        <authorList>
            <person name="Fallini C."/>
            <person name="Zhang H."/>
            <person name="Su Y."/>
            <person name="Silani V."/>
            <person name="Singer R.H."/>
            <person name="Rossoll W."/>
            <person name="Bassell G.J."/>
        </authorList>
    </citation>
    <scope>INTERACTION WITH SMN</scope>
</reference>
<reference key="17">
    <citation type="journal article" date="2012" name="Mol. Cell">
        <title>RNA-binding protein HuD controls insulin translation.</title>
        <authorList>
            <person name="Lee E.K."/>
            <person name="Kim W."/>
            <person name="Tominaga K."/>
            <person name="Martindale J.L."/>
            <person name="Yang X."/>
            <person name="Subaran S.S."/>
            <person name="Carlson O.D."/>
            <person name="Mercken E.M."/>
            <person name="Kulkarni R.N."/>
            <person name="Akamatsu W."/>
            <person name="Okano H."/>
            <person name="Perrone-Bizzozero N.I."/>
            <person name="de Cabo R."/>
            <person name="Egan J.M."/>
            <person name="Gorospe M."/>
        </authorList>
    </citation>
    <scope>TISSUE SPECIFICITY</scope>
</reference>
<reference key="18">
    <citation type="journal article" date="2014" name="Cell Rep.">
        <title>HuD regulates coding and noncoding RNA to induce APP[?]Abeta processing.</title>
        <authorList>
            <person name="Kang M.J."/>
            <person name="Abdelmohsen K."/>
            <person name="Hutchison E.R."/>
            <person name="Mitchell S.J."/>
            <person name="Grammatikakis I."/>
            <person name="Guo R."/>
            <person name="Noh J.H."/>
            <person name="Martindale J.L."/>
            <person name="Yang X."/>
            <person name="Lee E.K."/>
            <person name="Faghihi M.A."/>
            <person name="Wahlestedt C."/>
            <person name="Troncoso J.C."/>
            <person name="Pletnikova O."/>
            <person name="Perrone-Bizzozero N."/>
            <person name="Resnick S.M."/>
            <person name="de Cabo R."/>
            <person name="Mattson M.P."/>
            <person name="Gorospe M."/>
        </authorList>
    </citation>
    <scope>FUNCTION</scope>
</reference>
<reference key="19">
    <citation type="journal article" date="2017" name="J. Neurosci.">
        <title>HuD and the Survival Motor Neuron Protein Interact in Motoneurons and Are Essential for Motoneuron Development, Function, and mRNA Regulation.</title>
        <authorList>
            <person name="Hao le T."/>
            <person name="Duy P.Q."/>
            <person name="An M."/>
            <person name="Talbot J."/>
            <person name="Iyer C.C."/>
            <person name="Wolman M."/>
            <person name="Beattie C.E."/>
        </authorList>
    </citation>
    <scope>INTERACTION WITH SMN</scope>
</reference>
<reference key="20">
    <citation type="journal article" date="2001" name="Nat. Struct. Biol.">
        <title>Structural basis for recognition of AU-rich element RNA by the HuD protein.</title>
        <authorList>
            <person name="Wang X."/>
            <person name="Tanaka Hall T.M."/>
        </authorList>
    </citation>
    <scope>X-RAY CRYSTALLOGRAPHY (1.8 ANGSTROMS) OF 49-215 IN COMPLEX WITH RNA</scope>
</reference>
<accession>P26378</accession>
<accession>B1APY6</accession>
<accession>B1APY7</accession>
<accession>B1APY8</accession>
<accession>B7Z4G7</accession>
<accession>Q8IYD4</accession>
<accession>Q96J74</accession>
<accession>Q96J75</accession>
<accession>Q9UD24</accession>
<feature type="chain" id="PRO_0000081583" description="ELAV-like protein 4">
    <location>
        <begin position="1"/>
        <end position="385"/>
    </location>
</feature>
<feature type="domain" description="RRM 1" evidence="3">
    <location>
        <begin position="51"/>
        <end position="129"/>
    </location>
</feature>
<feature type="domain" description="RRM 2" evidence="3">
    <location>
        <begin position="137"/>
        <end position="217"/>
    </location>
</feature>
<feature type="domain" description="RRM 3" evidence="3">
    <location>
        <begin position="302"/>
        <end position="380"/>
    </location>
</feature>
<feature type="region of interest" description="Disordered" evidence="4">
    <location>
        <begin position="12"/>
        <end position="48"/>
    </location>
</feature>
<feature type="compositionally biased region" description="Low complexity" evidence="4">
    <location>
        <begin position="18"/>
        <end position="33"/>
    </location>
</feature>
<feature type="compositionally biased region" description="Polar residues" evidence="4">
    <location>
        <begin position="34"/>
        <end position="48"/>
    </location>
</feature>
<feature type="modified residue" description="Phosphoserine" evidence="2">
    <location>
        <position position="38"/>
    </location>
</feature>
<feature type="modified residue" description="Phosphoserine" evidence="2">
    <location>
        <position position="233"/>
    </location>
</feature>
<feature type="modified residue" description="Asymmetric dimethylarginine; by CARM1; alternate" evidence="11">
    <location>
        <position position="248"/>
    </location>
</feature>
<feature type="modified residue" description="Omega-N-methylarginine; by CARM1; alternate" evidence="11">
    <location>
        <position position="248"/>
    </location>
</feature>
<feature type="splice variant" id="VSP_060279" description="In isoform 4." evidence="22">
    <original>MEWNGLKM</original>
    <variation>MEQ</variation>
    <location>
        <begin position="1"/>
        <end position="8"/>
    </location>
</feature>
<feature type="splice variant" id="VSP_060280" description="In isoform 5." evidence="23">
    <original>MEWNGLKM</original>
    <variation>MRLKNQ</variation>
    <location>
        <begin position="1"/>
        <end position="8"/>
    </location>
</feature>
<feature type="splice variant" id="VSP_060281" description="In isoform 1 and isoform 2." evidence="26">
    <original>MEWNGLK</original>
    <variation>MV</variation>
    <location>
        <begin position="1"/>
        <end position="7"/>
    </location>
</feature>
<feature type="splice variant" id="VSP_060282" description="In isoform 3." evidence="22">
    <original>MEWNGLK</original>
    <variation>MRLLLLREIVINESRNCSF</variation>
    <location>
        <begin position="1"/>
        <end position="7"/>
    </location>
</feature>
<feature type="splice variant" id="VSP_060283" description="In isoform 2, isoform 3, isoform 4 and isoform 5." evidence="22 23 24 25">
    <location>
        <begin position="264"/>
        <end position="277"/>
    </location>
</feature>
<feature type="sequence variant" id="VAR_058091" description="In dbSNP:rs17853533." evidence="10">
    <original>D</original>
    <variation>G</variation>
    <location>
        <position position="171"/>
    </location>
</feature>
<feature type="sequence variant" id="VAR_052204" description="In dbSNP:rs2494876." evidence="7 12 21">
    <original>P</original>
    <variation>S</variation>
    <location>
        <position position="275"/>
    </location>
</feature>
<feature type="sequence variant" id="VAR_058092" description="In dbSNP:rs17853531." evidence="10">
    <original>A</original>
    <variation>T</variation>
    <location>
        <position position="361"/>
    </location>
</feature>
<feature type="strand" evidence="27">
    <location>
        <begin position="51"/>
        <end position="57"/>
    </location>
</feature>
<feature type="helix" evidence="27">
    <location>
        <begin position="64"/>
        <end position="72"/>
    </location>
</feature>
<feature type="strand" evidence="27">
    <location>
        <begin position="77"/>
        <end position="84"/>
    </location>
</feature>
<feature type="turn" evidence="27">
    <location>
        <begin position="86"/>
        <end position="88"/>
    </location>
</feature>
<feature type="strand" evidence="27">
    <location>
        <begin position="91"/>
        <end position="101"/>
    </location>
</feature>
<feature type="helix" evidence="27">
    <location>
        <begin position="102"/>
        <end position="112"/>
    </location>
</feature>
<feature type="strand" evidence="27">
    <location>
        <begin position="123"/>
        <end position="126"/>
    </location>
</feature>
<feature type="helix" evidence="27">
    <location>
        <begin position="132"/>
        <end position="134"/>
    </location>
</feature>
<feature type="strand" evidence="27">
    <location>
        <begin position="138"/>
        <end position="143"/>
    </location>
</feature>
<feature type="helix" evidence="27">
    <location>
        <begin position="150"/>
        <end position="157"/>
    </location>
</feature>
<feature type="helix" evidence="27">
    <location>
        <begin position="158"/>
        <end position="160"/>
    </location>
</feature>
<feature type="strand" evidence="27">
    <location>
        <begin position="163"/>
        <end position="170"/>
    </location>
</feature>
<feature type="turn" evidence="27">
    <location>
        <begin position="172"/>
        <end position="174"/>
    </location>
</feature>
<feature type="strand" evidence="27">
    <location>
        <begin position="177"/>
        <end position="187"/>
    </location>
</feature>
<feature type="helix" evidence="27">
    <location>
        <begin position="188"/>
        <end position="198"/>
    </location>
</feature>
<feature type="strand" evidence="27">
    <location>
        <begin position="211"/>
        <end position="214"/>
    </location>
</feature>
<name>ELAV4_HUMAN</name>
<keyword id="KW-0002">3D-structure</keyword>
<keyword id="KW-0025">Alternative splicing</keyword>
<keyword id="KW-0966">Cell projection</keyword>
<keyword id="KW-0963">Cytoplasm</keyword>
<keyword id="KW-0488">Methylation</keyword>
<keyword id="KW-0507">mRNA processing</keyword>
<keyword id="KW-0508">mRNA splicing</keyword>
<keyword id="KW-0597">Phosphoprotein</keyword>
<keyword id="KW-1267">Proteomics identification</keyword>
<keyword id="KW-1185">Reference proteome</keyword>
<keyword id="KW-0677">Repeat</keyword>
<keyword id="KW-0694">RNA-binding</keyword>
<comment type="function">
    <text evidence="1 2 5 6 8 13 14 15 19 21">RNA-binding protein that is involved in the post-transcriptional regulation of mRNAs (PubMed:10710437, PubMed:12034726, PubMed:12468554, PubMed:17035636, PubMed:17234598, PubMed:7898713). Plays a role in the regulation of mRNA stability, alternative splicing and translation (PubMed:10710437, PubMed:12034726, PubMed:12468554, PubMed:17035636, PubMed:17234598, PubMed:7898713). Binds to AU-rich element (ARE) sequences in the 3' untranslated region (UTR) of target mRNAs, including GAP43, VEGF, FOS, CDKN1A and ACHE mRNA (PubMed:10710437, PubMed:12034726, PubMed:12468554, PubMed:7898713). Many of the target mRNAs are coding for RNA-binding proteins, transcription factors and proteins involved in RNA processing and/or neuronal development and function (By similarity). By binding to the mRNA 3'UTR, decreases mRNA deadenylation and thereby contributes to the stabilization of mRNA molecules and their protection from decay (PubMed:12034726). Also binds to the polyadenylated (poly(A)) tail in the 3'UTR of mRNA, thereby increasing its affinity for mRNA binding (PubMed:12034726). Mainly plays a role in neuron-specific RNA processing by stabilization of mRNAs such as GAP43, ACHE and mRNAs of other neuronal proteins, thereby contributing to the differentiation of neural progenitor cells, nervous system development, learning and memory mechanisms (PubMed:12034726, PubMed:12468554, PubMed:17234598, PubMed:18218628). Involved in the negative regulation of the proliferative activity of neuronal stem cells and in the positive regulation of neuronal differentiation of neural progenitor cells (By similarity). Promotes neuronal differentiation of neural stem/progenitor cells in the adult subventricular zone of the hippocampus by binding to and stabilizing SATB1 mRNA (By similarity). Binds and stabilizes MSI1 mRNA in neural stem cells (By similarity). Exhibits increased binding to ACHE mRNA during neuronal differentiation, thereby stabilizing ACHE mRNA and enhancing its expression (PubMed:12468554, PubMed:17234598). Protects CDKN1A mRNA from decay by binding to its 3'-UTR (By similarity). May bind to APP and BACE1 mRNAS and the BACE1AS lncRNA and enhance their stabilization (PubMed:24857657). Plays a role in neurite outgrowth and in the establishment and maturation of dendritic arbors, thereby contributing to neocortical and hippocampal circuitry function (By similarity). Stabilizes GAP43 mRNA and protects it from decay during postembryonic development in the brain (PubMed:12034726). By promoting the stabilization of GAP43 mRNA, plays a role in NGF-mediated neurite outgrowth (By similarity). Binds to BDNF long 3'UTR mRNA, thereby leading to its stabilization and increased dendritic translation after activation of PKC (By similarity). By increasing translation of BDNF after nerve injury, may contribute to nerve regeneration (By similarity). Acts as a stabilizing factor by binding to the 3'UTR of NOVA1 mRNA, thereby increasing its translation and enhancing its functional activity in neuron-specific splicing (PubMed:18218628). Stimulates translation of mRNA in a poly(A)- and cap-dependent manner, possibly by associating with the EIF4F cap-binding complex (By similarity). May also negatively regulate translation by binding to the 5'UTR of Ins2 mRNA, thereby repressing its translation (By similarity). Upon glucose stimulation, Ins2 mRNA is released from ELAVL4 and translational inhibition is abolished (By similarity). Also plays a role in the regulation of alternative splicing (PubMed:17035636). May regulate alternative splicing of CALCA pre-mRNA into Calcitonin and Calcitonin gene-related peptide 1 (CGRP) by competing with splicing regulator TIAR for binding to U-rich intronic sequences of CALCA pre-mRNA (PubMed:17035636).</text>
</comment>
<comment type="subunit">
    <text evidence="2 16 17 20">Component of a TAU mRNP complex, at least composed of IGF2BP1, ELAVL4 and G3BP (By similarity). Associates with the EIF4F cap-binding complex, composed of EIF4G, EIF4A, EIF4E and PABP (By similarity). Within the EIF4F cap-binding complex, interacts with EIF4A (By similarity). Interacts with SMN (via Tudor domain) in an RNA-independent manner; the interaction is required for localization of ELAVL4 to RNA granules (PubMed:21088113, PubMed:21389246, PubMed:29061699). Interacts with MAP1 light chain LC1 (via C-terminus); the interaction contributes to the association of ELAVL4 with microtubules (By similarity). Interacts with MAP1 light chain LC2 (By similarity).</text>
</comment>
<comment type="interaction">
    <interactant intactId="EBI-21603100">
        <id>P26378-2</id>
    </interactant>
    <interactant intactId="EBI-741753">
        <id>Q00994</id>
        <label>BEX3</label>
    </interactant>
    <organismsDiffer>false</organismsDiffer>
    <experiments>3</experiments>
</comment>
<comment type="interaction">
    <interactant intactId="EBI-21603100">
        <id>P26378-2</id>
    </interactant>
    <interactant intactId="EBI-10243741">
        <id>Q5H9J7</id>
        <label>BEX5</label>
    </interactant>
    <organismsDiffer>false</organismsDiffer>
    <experiments>3</experiments>
</comment>
<comment type="interaction">
    <interactant intactId="EBI-21603100">
        <id>P26378-2</id>
    </interactant>
    <interactant intactId="EBI-350590">
        <id>Q9UNS2</id>
        <label>COPS3</label>
    </interactant>
    <organismsDiffer>false</organismsDiffer>
    <experiments>3</experiments>
</comment>
<comment type="interaction">
    <interactant intactId="EBI-21603100">
        <id>P26378-2</id>
    </interactant>
    <interactant intactId="EBI-3508943">
        <id>Q9H816</id>
        <label>DCLRE1B</label>
    </interactant>
    <organismsDiffer>false</organismsDiffer>
    <experiments>3</experiments>
</comment>
<comment type="interaction">
    <interactant intactId="EBI-21603100">
        <id>P26378-2</id>
    </interactant>
    <interactant intactId="EBI-11748557">
        <id>Q9Y6C2-2</id>
        <label>EMILIN1</label>
    </interactant>
    <organismsDiffer>false</organismsDiffer>
    <experiments>3</experiments>
</comment>
<comment type="interaction">
    <interactant intactId="EBI-21603100">
        <id>P26378-2</id>
    </interactant>
    <interactant intactId="EBI-9089567">
        <id>Q99504</id>
        <label>EYA3</label>
    </interactant>
    <organismsDiffer>false</organismsDiffer>
    <experiments>3</experiments>
</comment>
<comment type="interaction">
    <interactant intactId="EBI-21603100">
        <id>P26378-2</id>
    </interactant>
    <interactant intactId="EBI-6425864">
        <id>Q3SYB3</id>
        <label>FOXD4L6</label>
    </interactant>
    <organismsDiffer>false</organismsDiffer>
    <experiments>3</experiments>
</comment>
<comment type="interaction">
    <interactant intactId="EBI-21603100">
        <id>P26378-2</id>
    </interactant>
    <interactant intactId="EBI-710124">
        <id>O60341</id>
        <label>KDM1A</label>
    </interactant>
    <organismsDiffer>false</organismsDiffer>
    <experiments>3</experiments>
</comment>
<comment type="interaction">
    <interactant intactId="EBI-21603100">
        <id>P26378-2</id>
    </interactant>
    <interactant intactId="EBI-399266">
        <id>Q9HAF1</id>
        <label>MEAF6</label>
    </interactant>
    <organismsDiffer>false</organismsDiffer>
    <experiments>3</experiments>
</comment>
<comment type="interaction">
    <interactant intactId="EBI-21603100">
        <id>P26378-2</id>
    </interactant>
    <interactant intactId="EBI-514199">
        <id>Q9H204</id>
        <label>MED28</label>
    </interactant>
    <organismsDiffer>false</organismsDiffer>
    <experiments>3</experiments>
</comment>
<comment type="interaction">
    <interactant intactId="EBI-21603100">
        <id>P26378-2</id>
    </interactant>
    <interactant intactId="EBI-21250407">
        <id>A4FUJ8</id>
        <label>MKL1</label>
    </interactant>
    <organismsDiffer>false</organismsDiffer>
    <experiments>3</experiments>
</comment>
<comment type="interaction">
    <interactant intactId="EBI-21603100">
        <id>P26378-2</id>
    </interactant>
    <interactant intactId="EBI-9092052">
        <id>Q9Y3D2</id>
        <label>MSRB2</label>
    </interactant>
    <organismsDiffer>false</organismsDiffer>
    <experiments>3</experiments>
</comment>
<comment type="interaction">
    <interactant intactId="EBI-21603100">
        <id>P26378-2</id>
    </interactant>
    <interactant intactId="EBI-25852289">
        <id>Q8NC67-2</id>
        <label>NETO2</label>
    </interactant>
    <organismsDiffer>false</organismsDiffer>
    <experiments>3</experiments>
</comment>
<comment type="interaction">
    <interactant intactId="EBI-21603100">
        <id>P26378-2</id>
    </interactant>
    <interactant intactId="EBI-2557388">
        <id>Q96MF7</id>
        <label>NSMCE2</label>
    </interactant>
    <organismsDiffer>false</organismsDiffer>
    <experiments>3</experiments>
</comment>
<comment type="interaction">
    <interactant intactId="EBI-21603100">
        <id>P26378-2</id>
    </interactant>
    <interactant intactId="EBI-2811699">
        <id>Q9NP74</id>
        <label>PALMD</label>
    </interactant>
    <organismsDiffer>false</organismsDiffer>
    <experiments>3</experiments>
</comment>
<comment type="interaction">
    <interactant intactId="EBI-21603100">
        <id>P26378-2</id>
    </interactant>
    <interactant intactId="EBI-629434">
        <id>O75925</id>
        <label>PIAS1</label>
    </interactant>
    <organismsDiffer>false</organismsDiffer>
    <experiments>3</experiments>
</comment>
<comment type="interaction">
    <interactant intactId="EBI-21603100">
        <id>P26378-2</id>
    </interactant>
    <interactant intactId="EBI-476586">
        <id>P17612</id>
        <label>PRKACA</label>
    </interactant>
    <organismsDiffer>false</organismsDiffer>
    <experiments>3</experiments>
</comment>
<comment type="interaction">
    <interactant intactId="EBI-21603100">
        <id>P26378-2</id>
    </interactant>
    <interactant intactId="EBI-746453">
        <id>P54725</id>
        <label>RAD23A</label>
    </interactant>
    <organismsDiffer>false</organismsDiffer>
    <experiments>3</experiments>
</comment>
<comment type="interaction">
    <interactant intactId="EBI-21603100">
        <id>P26378-2</id>
    </interactant>
    <interactant intactId="EBI-10246897">
        <id>Q5TAB7</id>
        <label>RIPPLY2</label>
    </interactant>
    <organismsDiffer>false</organismsDiffer>
    <experiments>3</experiments>
</comment>
<comment type="interaction">
    <interactant intactId="EBI-21603100">
        <id>P26378-2</id>
    </interactant>
    <interactant intactId="EBI-21535400">
        <id>Q6ZNA4-2</id>
        <label>RNF111</label>
    </interactant>
    <organismsDiffer>false</organismsDiffer>
    <experiments>3</experiments>
</comment>
<comment type="interaction">
    <interactant intactId="EBI-21603100">
        <id>P26378-2</id>
    </interactant>
    <interactant intactId="EBI-25829984">
        <id>Q9ULX5</id>
        <label>RNF112</label>
    </interactant>
    <organismsDiffer>false</organismsDiffer>
    <experiments>3</experiments>
</comment>
<comment type="interaction">
    <interactant intactId="EBI-21603100">
        <id>P26378-2</id>
    </interactant>
    <interactant intactId="EBI-752324">
        <id>Q8N488</id>
        <label>RYBP</label>
    </interactant>
    <organismsDiffer>false</organismsDiffer>
    <experiments>3</experiments>
</comment>
<comment type="interaction">
    <interactant intactId="EBI-21603100">
        <id>P26378-2</id>
    </interactant>
    <interactant intactId="EBI-632609">
        <id>O75446</id>
        <label>SAP30</label>
    </interactant>
    <organismsDiffer>false</organismsDiffer>
    <experiments>3</experiments>
</comment>
<comment type="interaction">
    <interactant intactId="EBI-21603100">
        <id>P26378-2</id>
    </interactant>
    <interactant intactId="EBI-358545">
        <id>Q9GZS3</id>
        <label>SKIC8</label>
    </interactant>
    <organismsDiffer>false</organismsDiffer>
    <experiments>3</experiments>
</comment>
<comment type="interaction">
    <interactant intactId="EBI-21603100">
        <id>P26378-2</id>
    </interactant>
    <interactant intactId="EBI-2510414">
        <id>Q8IUW3</id>
        <label>SPATA2L</label>
    </interactant>
    <organismsDiffer>false</organismsDiffer>
    <experiments>3</experiments>
</comment>
<comment type="interaction">
    <interactant intactId="EBI-21603100">
        <id>P26378-2</id>
    </interactant>
    <interactant intactId="EBI-25840535">
        <id>Q15554-4</id>
        <label>TERF2</label>
    </interactant>
    <organismsDiffer>false</organismsDiffer>
    <experiments>3</experiments>
</comment>
<comment type="interaction">
    <interactant intactId="EBI-21603100">
        <id>P26378-2</id>
    </interactant>
    <interactant intactId="EBI-296151">
        <id>P37173</id>
        <label>TGFBR2</label>
    </interactant>
    <organismsDiffer>false</organismsDiffer>
    <experiments>3</experiments>
</comment>
<comment type="interaction">
    <interactant intactId="EBI-21603100">
        <id>P26378-2</id>
    </interactant>
    <interactant intactId="EBI-25852210">
        <id>Q9BZW5-2</id>
        <label>TM6SF1</label>
    </interactant>
    <organismsDiffer>false</organismsDiffer>
    <experiments>3</experiments>
</comment>
<comment type="interaction">
    <interactant intactId="EBI-21603100">
        <id>P26378-2</id>
    </interactant>
    <interactant intactId="EBI-1390168">
        <id>Q9H8H3</id>
        <label>TMT1A</label>
    </interactant>
    <organismsDiffer>false</organismsDiffer>
    <experiments>3</experiments>
</comment>
<comment type="interaction">
    <interactant intactId="EBI-21603100">
        <id>P26378-2</id>
    </interactant>
    <interactant intactId="EBI-2555404">
        <id>Q6PID6</id>
        <label>TTC33</label>
    </interactant>
    <organismsDiffer>false</organismsDiffer>
    <experiments>3</experiments>
</comment>
<comment type="interaction">
    <interactant intactId="EBI-21603100">
        <id>P26378-2</id>
    </interactant>
    <interactant intactId="EBI-355164">
        <id>P55072</id>
        <label>VCP</label>
    </interactant>
    <organismsDiffer>false</organismsDiffer>
    <experiments>3</experiments>
</comment>
<comment type="interaction">
    <interactant intactId="EBI-21603100">
        <id>P26378-2</id>
    </interactant>
    <interactant intactId="EBI-6427899">
        <id>P58304</id>
        <label>VSX2</label>
    </interactant>
    <organismsDiffer>false</organismsDiffer>
    <experiments>3</experiments>
</comment>
<comment type="interaction">
    <interactant intactId="EBI-21603100">
        <id>P26378-2</id>
    </interactant>
    <interactant intactId="EBI-2602314">
        <id>Q15776</id>
        <label>ZKSCAN8</label>
    </interactant>
    <organismsDiffer>false</organismsDiffer>
    <experiments>3</experiments>
</comment>
<comment type="interaction">
    <interactant intactId="EBI-21603100">
        <id>P26378-2</id>
    </interactant>
    <interactant intactId="EBI-749023">
        <id>Q9UNY5</id>
        <label>ZNF232</label>
    </interactant>
    <organismsDiffer>false</organismsDiffer>
    <experiments>3</experiments>
</comment>
<comment type="interaction">
    <interactant intactId="EBI-21603100">
        <id>P26378-2</id>
    </interactant>
    <interactant intactId="EBI-8489702">
        <id>Q9C0F3</id>
        <label>ZNF436</label>
    </interactant>
    <organismsDiffer>false</organismsDiffer>
    <experiments>3</experiments>
</comment>
<comment type="interaction">
    <interactant intactId="EBI-21603100">
        <id>P26378-2</id>
    </interactant>
    <interactant intactId="EBI-947476">
        <id>Q9UID6</id>
        <label>ZNF639</label>
    </interactant>
    <organismsDiffer>false</organismsDiffer>
    <experiments>3</experiments>
</comment>
<comment type="subcellular location">
    <subcellularLocation>
        <location evidence="16">Cytoplasm</location>
    </subcellularLocation>
    <subcellularLocation>
        <location evidence="1">Perikaryon</location>
    </subcellularLocation>
    <subcellularLocation>
        <location evidence="1">Cell projection</location>
        <location evidence="1">Dendrite</location>
    </subcellularLocation>
    <subcellularLocation>
        <location evidence="2">Cell projection</location>
        <location evidence="2">Axon</location>
    </subcellularLocation>
    <subcellularLocation>
        <location evidence="2">Cell projection</location>
        <location evidence="2">Growth cone</location>
    </subcellularLocation>
    <text evidence="1">Co-localizes with ribosomal RNA in polysomes.</text>
</comment>
<comment type="alternative products">
    <event type="alternative splicing"/>
    <isoform>
        <id>P26378-6</id>
        <name>6</name>
        <name evidence="26">Long</name>
        <sequence type="displayed"/>
    </isoform>
    <isoform>
        <id>P26378-1</id>
        <name>1</name>
        <name>HUD1PRO</name>
        <sequence type="described" ref="VSP_060281"/>
    </isoform>
    <isoform>
        <id>P26378-2</id>
        <name>2</name>
        <name>HUD1</name>
        <sequence type="described" ref="VSP_060281 VSP_060283"/>
    </isoform>
    <isoform>
        <id>P26378-3</id>
        <name>3</name>
        <name>HUD4</name>
        <sequence type="described" ref="VSP_060282 VSP_060283"/>
    </isoform>
    <isoform>
        <id>P26378-4</id>
        <name>4</name>
        <name>HUD3</name>
        <sequence type="described" ref="VSP_060279 VSP_060283"/>
    </isoform>
    <isoform>
        <id>P26378-5</id>
        <name>5</name>
        <sequence type="described" ref="VSP_060280 VSP_060283"/>
    </isoform>
</comment>
<comment type="tissue specificity">
    <text evidence="9 12 18">Expressed in pancreatic beta cells (at protein level) (PubMed:22387028). Expressed in the brain (PubMed:14702039, PubMed:1655278).</text>
</comment>
<comment type="domain">
    <text evidence="2">The RRM 3 domain is required for binding to poly(A) RNA, for the association with polysomes and with the EIF4F cap-binding complex and for the stimulation of translation (By similarity). The RRM 1 and RRM 2 domains may contribute to polysome association and stimulation of translation (By similarity).</text>
</comment>
<comment type="PTM">
    <text evidence="1 16">Methylated by CARM1, which leads to reduced RNA-binding activity and enhanced interaction with SMN (PubMed:21088113). Methylation at Arg-248 by CARM1 weakens protective binding to the 3'UTR of CDKN1A mRNA and down-regulates CDKN1A protein expression, thereby maintaining cells in a proliferative state (By similarity). Methylation is inhibited by NGF, which facilitates neurite outgrowth (By similarity).</text>
</comment>
<comment type="similarity">
    <text evidence="26">Belongs to the RRM elav family.</text>
</comment>
<proteinExistence type="evidence at protein level"/>
<organism>
    <name type="scientific">Homo sapiens</name>
    <name type="common">Human</name>
    <dbReference type="NCBI Taxonomy" id="9606"/>
    <lineage>
        <taxon>Eukaryota</taxon>
        <taxon>Metazoa</taxon>
        <taxon>Chordata</taxon>
        <taxon>Craniata</taxon>
        <taxon>Vertebrata</taxon>
        <taxon>Euteleostomi</taxon>
        <taxon>Mammalia</taxon>
        <taxon>Eutheria</taxon>
        <taxon>Euarchontoglires</taxon>
        <taxon>Primates</taxon>
        <taxon>Haplorrhini</taxon>
        <taxon>Catarrhini</taxon>
        <taxon>Hominidae</taxon>
        <taxon>Homo</taxon>
    </lineage>
</organism>
<gene>
    <name type="primary">ELAVL4</name>
    <name type="synonym">HUD</name>
    <name type="synonym">PNEM</name>
</gene>
<protein>
    <recommendedName>
        <fullName>ELAV-like protein 4</fullName>
    </recommendedName>
    <alternativeName>
        <fullName>Hu-antigen D</fullName>
        <shortName>HuD</shortName>
    </alternativeName>
    <alternativeName>
        <fullName>Paraneoplastic encephalomyelitis antigen HuD</fullName>
    </alternativeName>
</protein>
<dbReference type="EMBL" id="M62843">
    <property type="protein sequence ID" value="AAA58396.1"/>
    <property type="molecule type" value="mRNA"/>
</dbReference>
<dbReference type="EMBL" id="AY033995">
    <property type="protein sequence ID" value="AAK57538.1"/>
    <property type="molecule type" value="mRNA"/>
</dbReference>
<dbReference type="EMBL" id="AY033996">
    <property type="protein sequence ID" value="AAK57539.1"/>
    <property type="molecule type" value="mRNA"/>
</dbReference>
<dbReference type="EMBL" id="AY033997">
    <property type="protein sequence ID" value="AAK57540.1"/>
    <property type="molecule type" value="mRNA"/>
</dbReference>
<dbReference type="EMBL" id="AY033998">
    <property type="protein sequence ID" value="AAK57541.1"/>
    <property type="molecule type" value="mRNA"/>
</dbReference>
<dbReference type="EMBL" id="AK297338">
    <property type="protein sequence ID" value="BAH12553.1"/>
    <property type="molecule type" value="mRNA"/>
</dbReference>
<dbReference type="EMBL" id="AL583843">
    <property type="status" value="NOT_ANNOTATED_CDS"/>
    <property type="molecule type" value="Genomic_DNA"/>
</dbReference>
<dbReference type="EMBL" id="AL592182">
    <property type="status" value="NOT_ANNOTATED_CDS"/>
    <property type="molecule type" value="Genomic_DNA"/>
</dbReference>
<dbReference type="EMBL" id="AL645730">
    <property type="status" value="NOT_ANNOTATED_CDS"/>
    <property type="molecule type" value="Genomic_DNA"/>
</dbReference>
<dbReference type="EMBL" id="AL731870">
    <property type="status" value="NOT_ANNOTATED_CDS"/>
    <property type="molecule type" value="Genomic_DNA"/>
</dbReference>
<dbReference type="EMBL" id="CH471059">
    <property type="protein sequence ID" value="EAX06845.1"/>
    <property type="molecule type" value="Genomic_DNA"/>
</dbReference>
<dbReference type="EMBL" id="BC036071">
    <property type="protein sequence ID" value="AAH36071.1"/>
    <property type="molecule type" value="mRNA"/>
</dbReference>
<dbReference type="CCDS" id="CCDS44138.1">
    <molecule id="P26378-4"/>
</dbReference>
<dbReference type="CCDS" id="CCDS44140.1">
    <molecule id="P26378-2"/>
</dbReference>
<dbReference type="CCDS" id="CCDS53315.1">
    <molecule id="P26378-5"/>
</dbReference>
<dbReference type="CCDS" id="CCDS553.1">
    <molecule id="P26378-1"/>
</dbReference>
<dbReference type="CCDS" id="CCDS81321.1">
    <molecule id="P26378-6"/>
</dbReference>
<dbReference type="PIR" id="A40348">
    <property type="entry name" value="A40348"/>
</dbReference>
<dbReference type="RefSeq" id="NP_001138246.1">
    <molecule id="P26378-2"/>
    <property type="nucleotide sequence ID" value="NM_001144774.3"/>
</dbReference>
<dbReference type="RefSeq" id="NP_001138247.2">
    <property type="nucleotide sequence ID" value="NM_001144775.2"/>
</dbReference>
<dbReference type="RefSeq" id="NP_001138248.1">
    <molecule id="P26378-4"/>
    <property type="nucleotide sequence ID" value="NM_001144776.3"/>
</dbReference>
<dbReference type="RefSeq" id="NP_001138249.1">
    <molecule id="P26378-5"/>
    <property type="nucleotide sequence ID" value="NM_001144777.3"/>
</dbReference>
<dbReference type="RefSeq" id="NP_001281277.1">
    <property type="nucleotide sequence ID" value="NM_001294348.1"/>
</dbReference>
<dbReference type="RefSeq" id="NP_001311142.1">
    <molecule id="P26378-6"/>
    <property type="nucleotide sequence ID" value="NM_001324213.2"/>
</dbReference>
<dbReference type="RefSeq" id="NP_068771.2">
    <molecule id="P26378-1"/>
    <property type="nucleotide sequence ID" value="NM_021952.5"/>
</dbReference>
<dbReference type="PDB" id="1FXL">
    <property type="method" value="X-ray"/>
    <property type="resolution" value="1.80 A"/>
    <property type="chains" value="A=49-215"/>
</dbReference>
<dbReference type="PDB" id="1G2E">
    <property type="method" value="X-ray"/>
    <property type="resolution" value="2.30 A"/>
    <property type="chains" value="A=49-215"/>
</dbReference>
<dbReference type="PDBsum" id="1FXL"/>
<dbReference type="PDBsum" id="1G2E"/>
<dbReference type="SMR" id="P26378"/>
<dbReference type="BioGRID" id="108311">
    <property type="interactions" value="64"/>
</dbReference>
<dbReference type="FunCoup" id="P26378">
    <property type="interactions" value="578"/>
</dbReference>
<dbReference type="IntAct" id="P26378">
    <property type="interactions" value="66"/>
</dbReference>
<dbReference type="MINT" id="P26378"/>
<dbReference type="STRING" id="9606.ENSP00000349594"/>
<dbReference type="iPTMnet" id="P26378"/>
<dbReference type="PhosphoSitePlus" id="P26378"/>
<dbReference type="BioMuta" id="ELAVL4"/>
<dbReference type="DMDM" id="223590202"/>
<dbReference type="jPOST" id="P26378"/>
<dbReference type="MassIVE" id="P26378"/>
<dbReference type="PaxDb" id="9606-ENSP00000349594"/>
<dbReference type="PeptideAtlas" id="P26378"/>
<dbReference type="ProteomicsDB" id="3315"/>
<dbReference type="ProteomicsDB" id="54330">
    <molecule id="P26378-1"/>
</dbReference>
<dbReference type="ProteomicsDB" id="54331">
    <molecule id="P26378-2"/>
</dbReference>
<dbReference type="ProteomicsDB" id="54332">
    <molecule id="P26378-3"/>
</dbReference>
<dbReference type="ProteomicsDB" id="54333">
    <molecule id="P26378-4"/>
</dbReference>
<dbReference type="ProteomicsDB" id="54334">
    <molecule id="P26378-5"/>
</dbReference>
<dbReference type="Pumba" id="P26378"/>
<dbReference type="Antibodypedia" id="3839">
    <property type="antibodies" value="255 antibodies from 30 providers"/>
</dbReference>
<dbReference type="DNASU" id="1996"/>
<dbReference type="Ensembl" id="ENST00000371821.6">
    <molecule id="P26378-6"/>
    <property type="protein sequence ID" value="ENSP00000360886.1"/>
    <property type="gene ID" value="ENSG00000162374.18"/>
</dbReference>
<dbReference type="Ensembl" id="ENST00000371823.8">
    <molecule id="P26378-1"/>
    <property type="protein sequence ID" value="ENSP00000360888.4"/>
    <property type="gene ID" value="ENSG00000162374.18"/>
</dbReference>
<dbReference type="Ensembl" id="ENST00000371824.7">
    <molecule id="P26378-2"/>
    <property type="protein sequence ID" value="ENSP00000360889.2"/>
    <property type="gene ID" value="ENSG00000162374.18"/>
</dbReference>
<dbReference type="Ensembl" id="ENST00000371827.5">
    <molecule id="P26378-4"/>
    <property type="protein sequence ID" value="ENSP00000360892.1"/>
    <property type="gene ID" value="ENSG00000162374.18"/>
</dbReference>
<dbReference type="Ensembl" id="ENST00000448907.7">
    <molecule id="P26378-5"/>
    <property type="protein sequence ID" value="ENSP00000399939.2"/>
    <property type="gene ID" value="ENSG00000162374.18"/>
</dbReference>
<dbReference type="GeneID" id="1996"/>
<dbReference type="KEGG" id="hsa:1996"/>
<dbReference type="MANE-Select" id="ENST00000371824.7">
    <molecule id="P26378-2"/>
    <property type="protein sequence ID" value="ENSP00000360889.2"/>
    <property type="RefSeq nucleotide sequence ID" value="NM_001144774.3"/>
    <property type="RefSeq protein sequence ID" value="NP_001138246.1"/>
</dbReference>
<dbReference type="UCSC" id="uc001cry.3">
    <molecule id="P26378-6"/>
    <property type="organism name" value="human"/>
</dbReference>
<dbReference type="AGR" id="HGNC:3315"/>
<dbReference type="CTD" id="1996"/>
<dbReference type="DisGeNET" id="1996"/>
<dbReference type="GeneCards" id="ELAVL4"/>
<dbReference type="HGNC" id="HGNC:3315">
    <property type="gene designation" value="ELAVL4"/>
</dbReference>
<dbReference type="HPA" id="ENSG00000162374">
    <property type="expression patterns" value="Tissue enhanced (adrenal gland, brain)"/>
</dbReference>
<dbReference type="MIM" id="168360">
    <property type="type" value="gene"/>
</dbReference>
<dbReference type="neXtProt" id="NX_P26378"/>
<dbReference type="OpenTargets" id="ENSG00000162374"/>
<dbReference type="PharmGKB" id="PA27743"/>
<dbReference type="VEuPathDB" id="HostDB:ENSG00000162374"/>
<dbReference type="eggNOG" id="KOG0145">
    <property type="taxonomic scope" value="Eukaryota"/>
</dbReference>
<dbReference type="GeneTree" id="ENSGT00940000157399"/>
<dbReference type="HOGENOM" id="CLU_026186_2_2_1"/>
<dbReference type="InParanoid" id="P26378"/>
<dbReference type="OMA" id="GSEWCIF"/>
<dbReference type="OrthoDB" id="266020at2759"/>
<dbReference type="PAN-GO" id="P26378">
    <property type="GO annotations" value="0 GO annotations based on evolutionary models"/>
</dbReference>
<dbReference type="PhylomeDB" id="P26378"/>
<dbReference type="TreeFam" id="TF313377"/>
<dbReference type="PathwayCommons" id="P26378"/>
<dbReference type="SignaLink" id="P26378"/>
<dbReference type="SIGNOR" id="P26378"/>
<dbReference type="BioGRID-ORCS" id="1996">
    <property type="hits" value="13 hits in 1149 CRISPR screens"/>
</dbReference>
<dbReference type="CD-CODE" id="DEE660B4">
    <property type="entry name" value="Stress granule"/>
</dbReference>
<dbReference type="ChiTaRS" id="ELAVL4">
    <property type="organism name" value="human"/>
</dbReference>
<dbReference type="EvolutionaryTrace" id="P26378"/>
<dbReference type="GeneWiki" id="HuD_(protein)"/>
<dbReference type="GenomeRNAi" id="1996"/>
<dbReference type="Pharos" id="P26378">
    <property type="development level" value="Tbio"/>
</dbReference>
<dbReference type="PRO" id="PR:P26378"/>
<dbReference type="Proteomes" id="UP000005640">
    <property type="component" value="Chromosome 1"/>
</dbReference>
<dbReference type="RNAct" id="P26378">
    <property type="molecule type" value="protein"/>
</dbReference>
<dbReference type="Bgee" id="ENSG00000162374">
    <property type="expression patterns" value="Expressed in endothelial cell and 137 other cell types or tissues"/>
</dbReference>
<dbReference type="ExpressionAtlas" id="P26378">
    <property type="expression patterns" value="baseline and differential"/>
</dbReference>
<dbReference type="GO" id="GO:0030424">
    <property type="term" value="C:axon"/>
    <property type="evidence" value="ECO:0000250"/>
    <property type="project" value="UniProtKB"/>
</dbReference>
<dbReference type="GO" id="GO:0005737">
    <property type="term" value="C:cytoplasm"/>
    <property type="evidence" value="ECO:0000250"/>
    <property type="project" value="UniProtKB"/>
</dbReference>
<dbReference type="GO" id="GO:0030425">
    <property type="term" value="C:dendrite"/>
    <property type="evidence" value="ECO:0000250"/>
    <property type="project" value="UniProtKB"/>
</dbReference>
<dbReference type="GO" id="GO:0030426">
    <property type="term" value="C:growth cone"/>
    <property type="evidence" value="ECO:0007669"/>
    <property type="project" value="UniProtKB-SubCell"/>
</dbReference>
<dbReference type="GO" id="GO:0043204">
    <property type="term" value="C:perikaryon"/>
    <property type="evidence" value="ECO:0007669"/>
    <property type="project" value="UniProtKB-SubCell"/>
</dbReference>
<dbReference type="GO" id="GO:1990904">
    <property type="term" value="C:ribonucleoprotein complex"/>
    <property type="evidence" value="ECO:0007669"/>
    <property type="project" value="InterPro"/>
</dbReference>
<dbReference type="GO" id="GO:0035925">
    <property type="term" value="F:mRNA 3'-UTR AU-rich region binding"/>
    <property type="evidence" value="ECO:0000314"/>
    <property type="project" value="UniProtKB"/>
</dbReference>
<dbReference type="GO" id="GO:0003730">
    <property type="term" value="F:mRNA 3'-UTR binding"/>
    <property type="evidence" value="ECO:0000314"/>
    <property type="project" value="UniProtKB"/>
</dbReference>
<dbReference type="GO" id="GO:0008143">
    <property type="term" value="F:poly(A) binding"/>
    <property type="evidence" value="ECO:0000314"/>
    <property type="project" value="UniProtKB"/>
</dbReference>
<dbReference type="GO" id="GO:0097158">
    <property type="term" value="F:pre-mRNA intronic pyrimidine-rich binding"/>
    <property type="evidence" value="ECO:0000314"/>
    <property type="project" value="UniProtKB"/>
</dbReference>
<dbReference type="GO" id="GO:0070935">
    <property type="term" value="P:3'-UTR-mediated mRNA stabilization"/>
    <property type="evidence" value="ECO:0000314"/>
    <property type="project" value="UniProtKB"/>
</dbReference>
<dbReference type="GO" id="GO:0021895">
    <property type="term" value="P:cerebral cortex neuron differentiation"/>
    <property type="evidence" value="ECO:0007669"/>
    <property type="project" value="Ensembl"/>
</dbReference>
<dbReference type="GO" id="GO:0048813">
    <property type="term" value="P:dendrite morphogenesis"/>
    <property type="evidence" value="ECO:0007669"/>
    <property type="project" value="Ensembl"/>
</dbReference>
<dbReference type="GO" id="GO:0007612">
    <property type="term" value="P:learning"/>
    <property type="evidence" value="ECO:0007669"/>
    <property type="project" value="Ensembl"/>
</dbReference>
<dbReference type="GO" id="GO:0007626">
    <property type="term" value="P:locomotory behavior"/>
    <property type="evidence" value="ECO:0007669"/>
    <property type="project" value="Ensembl"/>
</dbReference>
<dbReference type="GO" id="GO:0006397">
    <property type="term" value="P:mRNA processing"/>
    <property type="evidence" value="ECO:0000304"/>
    <property type="project" value="ProtInc"/>
</dbReference>
<dbReference type="GO" id="GO:1905870">
    <property type="term" value="P:positive regulation of 3'-UTR-mediated mRNA stabilization"/>
    <property type="evidence" value="ECO:0000314"/>
    <property type="project" value="UniProtKB"/>
</dbReference>
<dbReference type="GO" id="GO:0006396">
    <property type="term" value="P:RNA processing"/>
    <property type="evidence" value="ECO:0000314"/>
    <property type="project" value="UniProtKB"/>
</dbReference>
<dbReference type="GO" id="GO:0008380">
    <property type="term" value="P:RNA splicing"/>
    <property type="evidence" value="ECO:0007669"/>
    <property type="project" value="UniProtKB-KW"/>
</dbReference>
<dbReference type="CDD" id="cd12652">
    <property type="entry name" value="RRM2_Hu"/>
    <property type="match status" value="1"/>
</dbReference>
<dbReference type="CDD" id="cd12656">
    <property type="entry name" value="RRM3_HuD"/>
    <property type="match status" value="1"/>
</dbReference>
<dbReference type="FunFam" id="3.30.70.330:FF:000006">
    <property type="entry name" value="ELAV-like 3"/>
    <property type="match status" value="1"/>
</dbReference>
<dbReference type="FunFam" id="3.30.70.330:FF:000005">
    <property type="entry name" value="ELAV-like protein"/>
    <property type="match status" value="1"/>
</dbReference>
<dbReference type="FunFam" id="3.30.70.330:FF:000017">
    <property type="entry name" value="ELAV-like protein"/>
    <property type="match status" value="1"/>
</dbReference>
<dbReference type="Gene3D" id="3.30.70.330">
    <property type="match status" value="3"/>
</dbReference>
<dbReference type="InterPro" id="IPR006548">
    <property type="entry name" value="ELAD_HU_SF"/>
</dbReference>
<dbReference type="InterPro" id="IPR034918">
    <property type="entry name" value="HuD_RRM3"/>
</dbReference>
<dbReference type="InterPro" id="IPR002343">
    <property type="entry name" value="Hud_Sxl_RNA"/>
</dbReference>
<dbReference type="InterPro" id="IPR012677">
    <property type="entry name" value="Nucleotide-bd_a/b_plait_sf"/>
</dbReference>
<dbReference type="InterPro" id="IPR035979">
    <property type="entry name" value="RBD_domain_sf"/>
</dbReference>
<dbReference type="InterPro" id="IPR000504">
    <property type="entry name" value="RRM_dom"/>
</dbReference>
<dbReference type="NCBIfam" id="TIGR01661">
    <property type="entry name" value="ELAV_HUD_SF"/>
    <property type="match status" value="1"/>
</dbReference>
<dbReference type="PANTHER" id="PTHR10352">
    <property type="entry name" value="EUKARYOTIC TRANSLATION INITIATION FACTOR 3 SUBUNIT G"/>
    <property type="match status" value="1"/>
</dbReference>
<dbReference type="Pfam" id="PF00076">
    <property type="entry name" value="RRM_1"/>
    <property type="match status" value="3"/>
</dbReference>
<dbReference type="PRINTS" id="PR00961">
    <property type="entry name" value="HUDSXLRNA"/>
</dbReference>
<dbReference type="SMART" id="SM00360">
    <property type="entry name" value="RRM"/>
    <property type="match status" value="3"/>
</dbReference>
<dbReference type="SUPFAM" id="SSF54928">
    <property type="entry name" value="RNA-binding domain, RBD"/>
    <property type="match status" value="2"/>
</dbReference>
<dbReference type="PROSITE" id="PS50102">
    <property type="entry name" value="RRM"/>
    <property type="match status" value="3"/>
</dbReference>
<sequence length="385" mass="42398">MEWNGLKMIISTMEPQVSNGPTSNTSNGPSSNNRNCPSPMQTGATTDDSKTNLIVNYLPQNMTQEEFRSLFGSIGEIESCKLVRDKITGQSLGYGFVNYIDPKDAEKAINTLNGLRLQTKTIKVSYARPSSASIRDANLYVSGLPKTMTQKELEQLFSQYGRIITSRILVDQVTGVSRGVGFIRFDKRIEAEEAIKGLNGQKPSGATEPITVKFANNPSQKSSQALLSQLYQSPNRRYPGPLHHQAQRFRLDNLLNMAYGVKRLMSGPVPPSACPPRFSPITIDGMTSLVGMNIPGHTGTGWCIFVYNLSPDSDESVLWQLFGPFGAVNNVKVIRDFNTNKCKGFGFVTMTNYDEAAMAIASLNGYRLGDRVLQVSFKTNKAHKS</sequence>
<evidence type="ECO:0000250" key="1">
    <source>
        <dbReference type="UniProtKB" id="O09032"/>
    </source>
</evidence>
<evidence type="ECO:0000250" key="2">
    <source>
        <dbReference type="UniProtKB" id="Q61701"/>
    </source>
</evidence>
<evidence type="ECO:0000255" key="3">
    <source>
        <dbReference type="PROSITE-ProRule" id="PRU00176"/>
    </source>
</evidence>
<evidence type="ECO:0000256" key="4">
    <source>
        <dbReference type="SAM" id="MobiDB-lite"/>
    </source>
</evidence>
<evidence type="ECO:0000269" key="5">
    <source>
    </source>
</evidence>
<evidence type="ECO:0000269" key="6">
    <source>
    </source>
</evidence>
<evidence type="ECO:0000269" key="7">
    <source>
    </source>
</evidence>
<evidence type="ECO:0000269" key="8">
    <source>
    </source>
</evidence>
<evidence type="ECO:0000269" key="9">
    <source>
    </source>
</evidence>
<evidence type="ECO:0000269" key="10">
    <source>
    </source>
</evidence>
<evidence type="ECO:0000269" key="11">
    <source>
    </source>
</evidence>
<evidence type="ECO:0000269" key="12">
    <source>
    </source>
</evidence>
<evidence type="ECO:0000269" key="13">
    <source>
    </source>
</evidence>
<evidence type="ECO:0000269" key="14">
    <source>
    </source>
</evidence>
<evidence type="ECO:0000269" key="15">
    <source>
    </source>
</evidence>
<evidence type="ECO:0000269" key="16">
    <source>
    </source>
</evidence>
<evidence type="ECO:0000269" key="17">
    <source>
    </source>
</evidence>
<evidence type="ECO:0000269" key="18">
    <source>
    </source>
</evidence>
<evidence type="ECO:0000269" key="19">
    <source>
    </source>
</evidence>
<evidence type="ECO:0000269" key="20">
    <source>
    </source>
</evidence>
<evidence type="ECO:0000269" key="21">
    <source>
    </source>
</evidence>
<evidence type="ECO:0000303" key="22">
    <source>
    </source>
</evidence>
<evidence type="ECO:0000303" key="23">
    <source>
    </source>
</evidence>
<evidence type="ECO:0000303" key="24">
    <source>
    </source>
</evidence>
<evidence type="ECO:0000303" key="25">
    <source>
    </source>
</evidence>
<evidence type="ECO:0000305" key="26"/>
<evidence type="ECO:0007829" key="27">
    <source>
        <dbReference type="PDB" id="1FXL"/>
    </source>
</evidence>